<proteinExistence type="inferred from homology"/>
<accession>Q87LZ2</accession>
<sequence>MEKVPMTLRGEQMLRTELERLLKLRPQISEAIAEARELGDLKENAEYHAAREEQGICEAQIRDIEYKLSVAQVIDVTKMENTGKVIFGSTVTLIDVDTDEEKTYQIVGDDEADIKAGRISVSSPIARGLIGKMEGDEVAIQTPGGAKDFEIDRVEYI</sequence>
<comment type="function">
    <text evidence="1">Necessary for efficient RNA polymerase transcription elongation past template-encoded arresting sites. The arresting sites in DNA have the property of trapping a certain fraction of elongating RNA polymerases that pass through, resulting in locked ternary complexes. Cleavage of the nascent transcript by cleavage factors such as GreA or GreB allows the resumption of elongation from the new 3'terminus. GreA releases sequences of 2 to 3 nucleotides.</text>
</comment>
<comment type="similarity">
    <text evidence="1">Belongs to the GreA/GreB family.</text>
</comment>
<reference key="1">
    <citation type="journal article" date="2003" name="Lancet">
        <title>Genome sequence of Vibrio parahaemolyticus: a pathogenic mechanism distinct from that of V. cholerae.</title>
        <authorList>
            <person name="Makino K."/>
            <person name="Oshima K."/>
            <person name="Kurokawa K."/>
            <person name="Yokoyama K."/>
            <person name="Uda T."/>
            <person name="Tagomori K."/>
            <person name="Iijima Y."/>
            <person name="Najima M."/>
            <person name="Nakano M."/>
            <person name="Yamashita A."/>
            <person name="Kubota Y."/>
            <person name="Kimura S."/>
            <person name="Yasunaga T."/>
            <person name="Honda T."/>
            <person name="Shinagawa H."/>
            <person name="Hattori M."/>
            <person name="Iida T."/>
        </authorList>
    </citation>
    <scope>NUCLEOTIDE SEQUENCE [LARGE SCALE GENOMIC DNA]</scope>
    <source>
        <strain>RIMD 2210633</strain>
    </source>
</reference>
<keyword id="KW-0175">Coiled coil</keyword>
<keyword id="KW-0238">DNA-binding</keyword>
<keyword id="KW-0804">Transcription</keyword>
<keyword id="KW-0805">Transcription regulation</keyword>
<evidence type="ECO:0000255" key="1">
    <source>
        <dbReference type="HAMAP-Rule" id="MF_00105"/>
    </source>
</evidence>
<protein>
    <recommendedName>
        <fullName evidence="1">Transcription elongation factor GreA</fullName>
    </recommendedName>
    <alternativeName>
        <fullName evidence="1">Transcript cleavage factor GreA</fullName>
    </alternativeName>
</protein>
<feature type="chain" id="PRO_0000176991" description="Transcription elongation factor GreA">
    <location>
        <begin position="1"/>
        <end position="157"/>
    </location>
</feature>
<feature type="coiled-coil region" evidence="1">
    <location>
        <begin position="17"/>
        <end position="37"/>
    </location>
</feature>
<name>GREA_VIBPA</name>
<organism>
    <name type="scientific">Vibrio parahaemolyticus serotype O3:K6 (strain RIMD 2210633)</name>
    <dbReference type="NCBI Taxonomy" id="223926"/>
    <lineage>
        <taxon>Bacteria</taxon>
        <taxon>Pseudomonadati</taxon>
        <taxon>Pseudomonadota</taxon>
        <taxon>Gammaproteobacteria</taxon>
        <taxon>Vibrionales</taxon>
        <taxon>Vibrionaceae</taxon>
        <taxon>Vibrio</taxon>
    </lineage>
</organism>
<gene>
    <name evidence="1" type="primary">greA</name>
    <name type="ordered locus">VP2466</name>
</gene>
<dbReference type="EMBL" id="BA000031">
    <property type="protein sequence ID" value="BAC60729.1"/>
    <property type="molecule type" value="Genomic_DNA"/>
</dbReference>
<dbReference type="RefSeq" id="NP_798845.1">
    <property type="nucleotide sequence ID" value="NC_004603.1"/>
</dbReference>
<dbReference type="RefSeq" id="WP_005485311.1">
    <property type="nucleotide sequence ID" value="NC_004603.1"/>
</dbReference>
<dbReference type="SMR" id="Q87LZ2"/>
<dbReference type="GeneID" id="1189981"/>
<dbReference type="KEGG" id="vpa:VP2466"/>
<dbReference type="PATRIC" id="fig|223926.6.peg.2366"/>
<dbReference type="eggNOG" id="COG0782">
    <property type="taxonomic scope" value="Bacteria"/>
</dbReference>
<dbReference type="HOGENOM" id="CLU_101379_2_0_6"/>
<dbReference type="Proteomes" id="UP000002493">
    <property type="component" value="Chromosome 1"/>
</dbReference>
<dbReference type="GO" id="GO:0003677">
    <property type="term" value="F:DNA binding"/>
    <property type="evidence" value="ECO:0007669"/>
    <property type="project" value="UniProtKB-UniRule"/>
</dbReference>
<dbReference type="GO" id="GO:0070063">
    <property type="term" value="F:RNA polymerase binding"/>
    <property type="evidence" value="ECO:0007669"/>
    <property type="project" value="InterPro"/>
</dbReference>
<dbReference type="GO" id="GO:0006354">
    <property type="term" value="P:DNA-templated transcription elongation"/>
    <property type="evidence" value="ECO:0007669"/>
    <property type="project" value="TreeGrafter"/>
</dbReference>
<dbReference type="GO" id="GO:0032784">
    <property type="term" value="P:regulation of DNA-templated transcription elongation"/>
    <property type="evidence" value="ECO:0007669"/>
    <property type="project" value="UniProtKB-UniRule"/>
</dbReference>
<dbReference type="FunFam" id="1.10.287.180:FF:000001">
    <property type="entry name" value="Transcription elongation factor GreA"/>
    <property type="match status" value="1"/>
</dbReference>
<dbReference type="FunFam" id="3.10.50.30:FF:000001">
    <property type="entry name" value="Transcription elongation factor GreA"/>
    <property type="match status" value="1"/>
</dbReference>
<dbReference type="Gene3D" id="3.10.50.30">
    <property type="entry name" value="Transcription elongation factor, GreA/GreB, C-terminal domain"/>
    <property type="match status" value="1"/>
</dbReference>
<dbReference type="Gene3D" id="1.10.287.180">
    <property type="entry name" value="Transcription elongation factor, GreA/GreB, N-terminal domain"/>
    <property type="match status" value="1"/>
</dbReference>
<dbReference type="HAMAP" id="MF_00105">
    <property type="entry name" value="GreA_GreB"/>
    <property type="match status" value="1"/>
</dbReference>
<dbReference type="InterPro" id="IPR036953">
    <property type="entry name" value="GreA/GreB_C_sf"/>
</dbReference>
<dbReference type="InterPro" id="IPR018151">
    <property type="entry name" value="TF_GreA/GreB_CS"/>
</dbReference>
<dbReference type="InterPro" id="IPR006359">
    <property type="entry name" value="Tscrpt_elong_fac_GreA"/>
</dbReference>
<dbReference type="InterPro" id="IPR028624">
    <property type="entry name" value="Tscrpt_elong_fac_GreA/B"/>
</dbReference>
<dbReference type="InterPro" id="IPR001437">
    <property type="entry name" value="Tscrpt_elong_fac_GreA/B_C"/>
</dbReference>
<dbReference type="InterPro" id="IPR023459">
    <property type="entry name" value="Tscrpt_elong_fac_GreA/B_fam"/>
</dbReference>
<dbReference type="InterPro" id="IPR022691">
    <property type="entry name" value="Tscrpt_elong_fac_GreA/B_N"/>
</dbReference>
<dbReference type="InterPro" id="IPR036805">
    <property type="entry name" value="Tscrpt_elong_fac_GreA/B_N_sf"/>
</dbReference>
<dbReference type="NCBIfam" id="TIGR01462">
    <property type="entry name" value="greA"/>
    <property type="match status" value="1"/>
</dbReference>
<dbReference type="NCBIfam" id="NF001261">
    <property type="entry name" value="PRK00226.1-2"/>
    <property type="match status" value="1"/>
</dbReference>
<dbReference type="NCBIfam" id="NF001263">
    <property type="entry name" value="PRK00226.1-4"/>
    <property type="match status" value="1"/>
</dbReference>
<dbReference type="NCBIfam" id="NF001264">
    <property type="entry name" value="PRK00226.1-5"/>
    <property type="match status" value="1"/>
</dbReference>
<dbReference type="PANTHER" id="PTHR30437">
    <property type="entry name" value="TRANSCRIPTION ELONGATION FACTOR GREA"/>
    <property type="match status" value="1"/>
</dbReference>
<dbReference type="PANTHER" id="PTHR30437:SF4">
    <property type="entry name" value="TRANSCRIPTION ELONGATION FACTOR GREA"/>
    <property type="match status" value="1"/>
</dbReference>
<dbReference type="Pfam" id="PF01272">
    <property type="entry name" value="GreA_GreB"/>
    <property type="match status" value="1"/>
</dbReference>
<dbReference type="Pfam" id="PF03449">
    <property type="entry name" value="GreA_GreB_N"/>
    <property type="match status" value="1"/>
</dbReference>
<dbReference type="PIRSF" id="PIRSF006092">
    <property type="entry name" value="GreA_GreB"/>
    <property type="match status" value="1"/>
</dbReference>
<dbReference type="SUPFAM" id="SSF54534">
    <property type="entry name" value="FKBP-like"/>
    <property type="match status" value="1"/>
</dbReference>
<dbReference type="SUPFAM" id="SSF46557">
    <property type="entry name" value="GreA transcript cleavage protein, N-terminal domain"/>
    <property type="match status" value="1"/>
</dbReference>
<dbReference type="PROSITE" id="PS00829">
    <property type="entry name" value="GREAB_1"/>
    <property type="match status" value="1"/>
</dbReference>
<dbReference type="PROSITE" id="PS00830">
    <property type="entry name" value="GREAB_2"/>
    <property type="match status" value="1"/>
</dbReference>